<organism>
    <name type="scientific">Acanthoscurria gomesiana</name>
    <name type="common">Tarantula spider</name>
    <name type="synonym">Phormictopus pheopygus</name>
    <dbReference type="NCBI Taxonomy" id="115339"/>
    <lineage>
        <taxon>Eukaryota</taxon>
        <taxon>Metazoa</taxon>
        <taxon>Ecdysozoa</taxon>
        <taxon>Arthropoda</taxon>
        <taxon>Chelicerata</taxon>
        <taxon>Arachnida</taxon>
        <taxon>Araneae</taxon>
        <taxon>Mygalomorphae</taxon>
        <taxon>Theraphosidae</taxon>
        <taxon>Acanthoscurria</taxon>
    </lineage>
</organism>
<protein>
    <recommendedName>
        <fullName evidence="4">U1-theraphotoxin-Agm3a</fullName>
        <shortName evidence="4">U1-TRTX-Agm3a</shortName>
    </recommendedName>
</protein>
<proteinExistence type="evidence at protein level"/>
<evidence type="ECO:0000250" key="1">
    <source>
        <dbReference type="UniProtKB" id="P60980"/>
    </source>
</evidence>
<evidence type="ECO:0000255" key="2"/>
<evidence type="ECO:0000269" key="3">
    <source>
    </source>
</evidence>
<evidence type="ECO:0000303" key="4">
    <source>
    </source>
</evidence>
<evidence type="ECO:0000305" key="5"/>
<evidence type="ECO:0000305" key="6">
    <source>
    </source>
</evidence>
<dbReference type="SMR" id="P0DQJ5"/>
<dbReference type="GO" id="GO:0005576">
    <property type="term" value="C:extracellular region"/>
    <property type="evidence" value="ECO:0007669"/>
    <property type="project" value="UniProtKB-SubCell"/>
</dbReference>
<dbReference type="GO" id="GO:0008200">
    <property type="term" value="F:ion channel inhibitor activity"/>
    <property type="evidence" value="ECO:0007669"/>
    <property type="project" value="InterPro"/>
</dbReference>
<dbReference type="GO" id="GO:0015459">
    <property type="term" value="F:potassium channel regulator activity"/>
    <property type="evidence" value="ECO:0007669"/>
    <property type="project" value="UniProtKB-KW"/>
</dbReference>
<dbReference type="GO" id="GO:0017080">
    <property type="term" value="F:sodium channel regulator activity"/>
    <property type="evidence" value="ECO:0007669"/>
    <property type="project" value="UniProtKB-KW"/>
</dbReference>
<dbReference type="GO" id="GO:0090729">
    <property type="term" value="F:toxin activity"/>
    <property type="evidence" value="ECO:0007669"/>
    <property type="project" value="UniProtKB-KW"/>
</dbReference>
<dbReference type="InterPro" id="IPR011696">
    <property type="entry name" value="Huwentoxin-1"/>
</dbReference>
<dbReference type="InterPro" id="IPR013140">
    <property type="entry name" value="Huwentoxin_CS1"/>
</dbReference>
<dbReference type="Pfam" id="PF07740">
    <property type="entry name" value="Toxin_12"/>
    <property type="match status" value="1"/>
</dbReference>
<dbReference type="SUPFAM" id="SSF57059">
    <property type="entry name" value="omega toxin-like"/>
    <property type="match status" value="1"/>
</dbReference>
<dbReference type="PROSITE" id="PS60021">
    <property type="entry name" value="HWTX_1"/>
    <property type="match status" value="1"/>
</dbReference>
<reference key="1">
    <citation type="journal article" date="2017" name="J. Proteomics">
        <title>Peptidomics of Acanthoscurria gomesiana spider venom reveals new toxins with potential antimicrobial activity.</title>
        <authorList>
            <person name="Abreu T.F."/>
            <person name="Sumitomo B.N."/>
            <person name="Nishiyama M.Y. Jr."/>
            <person name="Oliveira U.C."/>
            <person name="Souza G.H."/>
            <person name="Kitano E.S."/>
            <person name="Zelanis A."/>
            <person name="Serrano S.M."/>
            <person name="Junqueira-de-Azevedo I."/>
            <person name="Silva P.I. Jr."/>
            <person name="Tashima A.K."/>
        </authorList>
    </citation>
    <scope>NUCLEOTIDE SEQUENCE [MRNA]</scope>
    <scope>MASS SPECTROMETRY</scope>
    <scope>SUBCELLULAR LOCATION</scope>
    <source>
        <tissue>Venom</tissue>
        <tissue>Venom gland</tissue>
    </source>
</reference>
<name>VSTX1_ACAGO</name>
<comment type="function">
    <text evidence="1">Inhibits sodium channels Nav1.7/SCN9A and potassium channels Kv11.1/KCNH2. Also binds the voltage-sensor domain of the potassium channel KvAP (from the archaeon Aeropyrum pernix) with very slow apparent binding kinetics and affects channel gating. Reaches its target by dynamically partitioning into anionic or zwitterionic headgroup lipid membranes. May bind to the open state of KvAP.</text>
</comment>
<comment type="subcellular location">
    <subcellularLocation>
        <location evidence="3">Secreted</location>
    </subcellularLocation>
</comment>
<comment type="tissue specificity">
    <text evidence="6">Expressed by the venom gland.</text>
</comment>
<comment type="domain">
    <text evidence="1">The presence of a 'disulfide through disulfide knot' structurally defines this protein as a knottin.</text>
</comment>
<comment type="mass spectrometry">
    <text>Monoisotopic mass.</text>
</comment>
<comment type="similarity">
    <text evidence="5">Belongs to the neurotoxin 10 (Hwtx-1) family. 63 (VsTx1) subfamily.</text>
</comment>
<sequence>MKFSVLVFILGLVLLLALSSATEMEENARACGSFMWKCSERLPCCQEYVCSPQWKWCQNP</sequence>
<accession>P0DQJ5</accession>
<feature type="signal peptide" evidence="2">
    <location>
        <begin position="1"/>
        <end position="21"/>
    </location>
</feature>
<feature type="propeptide" id="PRO_0000448549" evidence="1">
    <location>
        <begin position="22"/>
        <end position="29"/>
    </location>
</feature>
<feature type="chain" id="PRO_0000448550" description="U1-theraphotoxin-Agm3a" evidence="3">
    <location>
        <begin position="30"/>
        <end position="60"/>
    </location>
</feature>
<feature type="disulfide bond" evidence="1">
    <location>
        <begin position="31"/>
        <end position="45"/>
    </location>
</feature>
<feature type="disulfide bond" evidence="1">
    <location>
        <begin position="38"/>
        <end position="50"/>
    </location>
</feature>
<feature type="disulfide bond" evidence="1">
    <location>
        <begin position="44"/>
        <end position="57"/>
    </location>
</feature>
<keyword id="KW-1015">Disulfide bond</keyword>
<keyword id="KW-0872">Ion channel impairing toxin</keyword>
<keyword id="KW-0960">Knottin</keyword>
<keyword id="KW-0528">Neurotoxin</keyword>
<keyword id="KW-0632">Potassium channel impairing toxin</keyword>
<keyword id="KW-0964">Secreted</keyword>
<keyword id="KW-0732">Signal</keyword>
<keyword id="KW-0800">Toxin</keyword>
<keyword id="KW-1220">Voltage-gated potassium channel impairing toxin</keyword>
<keyword id="KW-0738">Voltage-gated sodium channel impairing toxin</keyword>